<name>CHMP3_DANRE</name>
<proteinExistence type="evidence at transcript level"/>
<organism>
    <name type="scientific">Danio rerio</name>
    <name type="common">Zebrafish</name>
    <name type="synonym">Brachydanio rerio</name>
    <dbReference type="NCBI Taxonomy" id="7955"/>
    <lineage>
        <taxon>Eukaryota</taxon>
        <taxon>Metazoa</taxon>
        <taxon>Chordata</taxon>
        <taxon>Craniata</taxon>
        <taxon>Vertebrata</taxon>
        <taxon>Euteleostomi</taxon>
        <taxon>Actinopterygii</taxon>
        <taxon>Neopterygii</taxon>
        <taxon>Teleostei</taxon>
        <taxon>Ostariophysi</taxon>
        <taxon>Cypriniformes</taxon>
        <taxon>Danionidae</taxon>
        <taxon>Danioninae</taxon>
        <taxon>Danio</taxon>
    </lineage>
</organism>
<evidence type="ECO:0000250" key="1"/>
<evidence type="ECO:0000255" key="2"/>
<evidence type="ECO:0000256" key="3">
    <source>
        <dbReference type="SAM" id="MobiDB-lite"/>
    </source>
</evidence>
<evidence type="ECO:0000305" key="4"/>
<comment type="function">
    <text evidence="1">Probable core component of the endosomal sorting required for transport complex III (ESCRT-III) which is involved in multivesicular bodies (MVBs) formation and sorting of endosomal cargo proteins into MVBs. MVBs contain intraluminal vesicles (ILVs) that are generated by invagination and scission from the limiting membrane of the endosome and mostly are delivered to lysosomes enabling degradation of membrane proteins, such as stimulated growth factor receptors, lysosomal enzymes and lipids. Involved in late stages of cytokinesis. Plays a role in endosomal sorting/trafficking of EGF receptor (By similarity).</text>
</comment>
<comment type="subunit">
    <text evidence="1">Probable core component of the endosomal sorting required for transport complex III (ESCRT-III). ESCRT-III components are thought to multimerize to form a flat lattice on the perimeter membrane of the endosome. Several assembly forms of ESCRT-III may exist that interact and act sequentially (By similarity).</text>
</comment>
<comment type="subcellular location">
    <subcellularLocation>
        <location evidence="1">Cytoplasm</location>
        <location evidence="1">Cytosol</location>
    </subcellularLocation>
    <subcellularLocation>
        <location evidence="1">Membrane</location>
        <topology evidence="1">Lipid-anchor</topology>
    </subcellularLocation>
    <subcellularLocation>
        <location evidence="1">Endosome</location>
    </subcellularLocation>
    <subcellularLocation>
        <location evidence="1">Late endosome membrane</location>
    </subcellularLocation>
</comment>
<comment type="similarity">
    <text evidence="4">Belongs to the SNF7 family.</text>
</comment>
<protein>
    <recommendedName>
        <fullName>Charged multivesicular body protein 3</fullName>
    </recommendedName>
    <alternativeName>
        <fullName>Chromatin-modifying protein 3</fullName>
    </alternativeName>
    <alternativeName>
        <fullName>Vacuolar protein-sorting-associated protein 24</fullName>
    </alternativeName>
</protein>
<reference key="1">
    <citation type="submission" date="2004-03" db="EMBL/GenBank/DDBJ databases">
        <authorList>
            <consortium name="NIH - Zebrafish Gene Collection (ZGC) project"/>
        </authorList>
    </citation>
    <scope>NUCLEOTIDE SEQUENCE [LARGE SCALE MRNA]</scope>
    <source>
        <tissue>Kidney</tissue>
    </source>
</reference>
<dbReference type="EMBL" id="BC066696">
    <property type="protein sequence ID" value="AAH66696.1"/>
    <property type="molecule type" value="mRNA"/>
</dbReference>
<dbReference type="RefSeq" id="NP_998485.1">
    <property type="nucleotide sequence ID" value="NM_213320.1"/>
</dbReference>
<dbReference type="SMR" id="Q6NY88"/>
<dbReference type="FunCoup" id="Q6NY88">
    <property type="interactions" value="2108"/>
</dbReference>
<dbReference type="STRING" id="7955.ENSDARP00000055486"/>
<dbReference type="PaxDb" id="7955-ENSDARP00000055486"/>
<dbReference type="Ensembl" id="ENSDART00000055487">
    <property type="protein sequence ID" value="ENSDARP00000055486"/>
    <property type="gene ID" value="ENSDARG00000038064"/>
</dbReference>
<dbReference type="GeneID" id="406621"/>
<dbReference type="KEGG" id="dre:406621"/>
<dbReference type="AGR" id="ZFIN:ZDB-GENE-040426-2600"/>
<dbReference type="CTD" id="51652"/>
<dbReference type="ZFIN" id="ZDB-GENE-040426-2600">
    <property type="gene designation" value="chmp3"/>
</dbReference>
<dbReference type="eggNOG" id="KOG3229">
    <property type="taxonomic scope" value="Eukaryota"/>
</dbReference>
<dbReference type="HOGENOM" id="CLU_069208_0_1_1"/>
<dbReference type="InParanoid" id="Q6NY88"/>
<dbReference type="OMA" id="KILWEVT"/>
<dbReference type="OrthoDB" id="2329734at2759"/>
<dbReference type="PhylomeDB" id="Q6NY88"/>
<dbReference type="TreeFam" id="TF105848"/>
<dbReference type="Reactome" id="R-DRE-1632852">
    <property type="pathway name" value="Macroautophagy"/>
</dbReference>
<dbReference type="Reactome" id="R-DRE-917729">
    <property type="pathway name" value="Endosomal Sorting Complex Required For Transport (ESCRT)"/>
</dbReference>
<dbReference type="Reactome" id="R-DRE-9668328">
    <property type="pathway name" value="Sealing of the nuclear envelope (NE) by ESCRT-III"/>
</dbReference>
<dbReference type="PRO" id="PR:Q6NY88"/>
<dbReference type="Proteomes" id="UP000000437">
    <property type="component" value="Chromosome 17"/>
</dbReference>
<dbReference type="Bgee" id="ENSDARG00000038064">
    <property type="expression patterns" value="Expressed in pharyngeal gill and 26 other cell types or tissues"/>
</dbReference>
<dbReference type="GO" id="GO:0005829">
    <property type="term" value="C:cytosol"/>
    <property type="evidence" value="ECO:0007669"/>
    <property type="project" value="UniProtKB-SubCell"/>
</dbReference>
<dbReference type="GO" id="GO:0000815">
    <property type="term" value="C:ESCRT III complex"/>
    <property type="evidence" value="ECO:0000318"/>
    <property type="project" value="GO_Central"/>
</dbReference>
<dbReference type="GO" id="GO:0031902">
    <property type="term" value="C:late endosome membrane"/>
    <property type="evidence" value="ECO:0007669"/>
    <property type="project" value="UniProtKB-SubCell"/>
</dbReference>
<dbReference type="GO" id="GO:0005771">
    <property type="term" value="C:multivesicular body"/>
    <property type="evidence" value="ECO:0000318"/>
    <property type="project" value="GO_Central"/>
</dbReference>
<dbReference type="GO" id="GO:0032509">
    <property type="term" value="P:endosome transport via multivesicular body sorting pathway"/>
    <property type="evidence" value="ECO:0000318"/>
    <property type="project" value="GO_Central"/>
</dbReference>
<dbReference type="GO" id="GO:0045324">
    <property type="term" value="P:late endosome to vacuole transport"/>
    <property type="evidence" value="ECO:0000318"/>
    <property type="project" value="GO_Central"/>
</dbReference>
<dbReference type="GO" id="GO:0015031">
    <property type="term" value="P:protein transport"/>
    <property type="evidence" value="ECO:0000318"/>
    <property type="project" value="GO_Central"/>
</dbReference>
<dbReference type="Gene3D" id="6.10.140.1230">
    <property type="match status" value="1"/>
</dbReference>
<dbReference type="InterPro" id="IPR005024">
    <property type="entry name" value="Snf7_fam"/>
</dbReference>
<dbReference type="PANTHER" id="PTHR10476">
    <property type="entry name" value="CHARGED MULTIVESICULAR BODY PROTEIN"/>
    <property type="match status" value="1"/>
</dbReference>
<dbReference type="Pfam" id="PF03357">
    <property type="entry name" value="Snf7"/>
    <property type="match status" value="1"/>
</dbReference>
<keyword id="KW-0175">Coiled coil</keyword>
<keyword id="KW-0963">Cytoplasm</keyword>
<keyword id="KW-0967">Endosome</keyword>
<keyword id="KW-0449">Lipoprotein</keyword>
<keyword id="KW-0472">Membrane</keyword>
<keyword id="KW-0519">Myristate</keyword>
<keyword id="KW-0653">Protein transport</keyword>
<keyword id="KW-1185">Reference proteome</keyword>
<keyword id="KW-0813">Transport</keyword>
<accession>Q6NY88</accession>
<gene>
    <name type="primary">chmp3</name>
    <name type="synonym">vps24</name>
    <name type="ORF">zgc:76972</name>
</gene>
<sequence length="221" mass="24807">MGLFGKTQEKPPKDLINEWSLKIRKEMRVIDRQIRDIQREEEKVKRSIKDAAKKGQKDVCIILAKEMIQSKRAINKLYASKAQMNSVLLSMKNQLSVLRVAGALQKSTEVMKAMQSLVKIPEIQATMRDLSKEMMKAGIIEEMLEDTLEGMDDEEEMEEAAEAEVDKILFEITAGALGKAPSKVTDLPDPVAIGATAAPEEESEEEEEIEEMQSRLAALRS</sequence>
<feature type="initiator methionine" description="Removed" evidence="2">
    <location>
        <position position="1"/>
    </location>
</feature>
<feature type="chain" id="PRO_0000211484" description="Charged multivesicular body protein 3">
    <location>
        <begin position="2"/>
        <end position="221"/>
    </location>
</feature>
<feature type="region of interest" description="Important for autoinhibitory function" evidence="1">
    <location>
        <begin position="59"/>
        <end position="64"/>
    </location>
</feature>
<feature type="region of interest" description="Important for autoinhibitory function" evidence="1">
    <location>
        <begin position="168"/>
        <end position="169"/>
    </location>
</feature>
<feature type="region of interest" description="Disordered" evidence="3">
    <location>
        <begin position="181"/>
        <end position="221"/>
    </location>
</feature>
<feature type="region of interest" description="Interaction with STAMBP" evidence="1">
    <location>
        <begin position="202"/>
        <end position="206"/>
    </location>
</feature>
<feature type="region of interest" description="Interaction with STAMBP" evidence="1">
    <location>
        <begin position="220"/>
        <end position="221"/>
    </location>
</feature>
<feature type="coiled-coil region" evidence="2">
    <location>
        <begin position="22"/>
        <end position="54"/>
    </location>
</feature>
<feature type="coiled-coil region" evidence="2">
    <location>
        <begin position="144"/>
        <end position="221"/>
    </location>
</feature>
<feature type="short sequence motif" description="MIT-interacting motif">
    <location>
        <begin position="200"/>
        <end position="210"/>
    </location>
</feature>
<feature type="compositionally biased region" description="Acidic residues" evidence="3">
    <location>
        <begin position="199"/>
        <end position="211"/>
    </location>
</feature>
<feature type="site" description="Interaction with STAMBP" evidence="1">
    <location>
        <position position="215"/>
    </location>
</feature>
<feature type="lipid moiety-binding region" description="N-myristoyl glycine" evidence="2">
    <location>
        <position position="2"/>
    </location>
</feature>